<protein>
    <recommendedName>
        <fullName evidence="1">Pantothenate kinase</fullName>
        <ecNumber evidence="1">2.7.1.33</ecNumber>
    </recommendedName>
    <alternativeName>
        <fullName evidence="1">Pantothenic acid kinase</fullName>
    </alternativeName>
</protein>
<proteinExistence type="inferred from homology"/>
<sequence length="322" mass="37212">MKIKITAEEGQYNAHDAYMHFERQKWAELRDNVELTLSEDDLRQLQGINESLSIQEVIDIYLPLSRLLNLYVKTQQRRHTVRDKFLNSKNENVPYIIGIAGSVAVGKSTTARILQAILSHWPEHPRVALVTTDGFLRPNRELVARNIMHKKGFPESFDTKALIDFVAAIKSGKELISAPIYSHLTYDILPDKKLHLEKPDIVILEGLNVLQSASNYPDHPQRTFVSDFVDFSIFVDAETQLLKKWYVQRFLKFRKGAFTDPKAYFHSYSQMEETQAIDISEKIWDEINGVNLEENIRPTRDRANLILTKATDHQVDSVHLRK</sequence>
<dbReference type="EC" id="2.7.1.33" evidence="1"/>
<dbReference type="EMBL" id="CP000510">
    <property type="protein sequence ID" value="ABM05305.1"/>
    <property type="molecule type" value="Genomic_DNA"/>
</dbReference>
<dbReference type="SMR" id="A1T0P0"/>
<dbReference type="STRING" id="357804.Ping_3622"/>
<dbReference type="KEGG" id="pin:Ping_3622"/>
<dbReference type="eggNOG" id="COG1072">
    <property type="taxonomic scope" value="Bacteria"/>
</dbReference>
<dbReference type="HOGENOM" id="CLU_053818_1_1_6"/>
<dbReference type="OrthoDB" id="1550976at2"/>
<dbReference type="UniPathway" id="UPA00241">
    <property type="reaction ID" value="UER00352"/>
</dbReference>
<dbReference type="Proteomes" id="UP000000639">
    <property type="component" value="Chromosome"/>
</dbReference>
<dbReference type="GO" id="GO:0005737">
    <property type="term" value="C:cytoplasm"/>
    <property type="evidence" value="ECO:0007669"/>
    <property type="project" value="UniProtKB-SubCell"/>
</dbReference>
<dbReference type="GO" id="GO:0005524">
    <property type="term" value="F:ATP binding"/>
    <property type="evidence" value="ECO:0007669"/>
    <property type="project" value="UniProtKB-UniRule"/>
</dbReference>
<dbReference type="GO" id="GO:0004594">
    <property type="term" value="F:pantothenate kinase activity"/>
    <property type="evidence" value="ECO:0007669"/>
    <property type="project" value="UniProtKB-UniRule"/>
</dbReference>
<dbReference type="GO" id="GO:0015937">
    <property type="term" value="P:coenzyme A biosynthetic process"/>
    <property type="evidence" value="ECO:0007669"/>
    <property type="project" value="UniProtKB-UniRule"/>
</dbReference>
<dbReference type="CDD" id="cd02025">
    <property type="entry name" value="PanK"/>
    <property type="match status" value="1"/>
</dbReference>
<dbReference type="FunFam" id="3.40.50.300:FF:000242">
    <property type="entry name" value="Pantothenate kinase"/>
    <property type="match status" value="1"/>
</dbReference>
<dbReference type="Gene3D" id="3.40.50.300">
    <property type="entry name" value="P-loop containing nucleotide triphosphate hydrolases"/>
    <property type="match status" value="1"/>
</dbReference>
<dbReference type="HAMAP" id="MF_00215">
    <property type="entry name" value="Pantothen_kinase_1"/>
    <property type="match status" value="1"/>
</dbReference>
<dbReference type="InterPro" id="IPR027417">
    <property type="entry name" value="P-loop_NTPase"/>
</dbReference>
<dbReference type="InterPro" id="IPR004566">
    <property type="entry name" value="PanK"/>
</dbReference>
<dbReference type="InterPro" id="IPR006083">
    <property type="entry name" value="PRK/URK"/>
</dbReference>
<dbReference type="NCBIfam" id="TIGR00554">
    <property type="entry name" value="panK_bact"/>
    <property type="match status" value="1"/>
</dbReference>
<dbReference type="PANTHER" id="PTHR10285">
    <property type="entry name" value="URIDINE KINASE"/>
    <property type="match status" value="1"/>
</dbReference>
<dbReference type="Pfam" id="PF00485">
    <property type="entry name" value="PRK"/>
    <property type="match status" value="1"/>
</dbReference>
<dbReference type="PIRSF" id="PIRSF000545">
    <property type="entry name" value="Pantothenate_kin"/>
    <property type="match status" value="1"/>
</dbReference>
<dbReference type="SUPFAM" id="SSF52540">
    <property type="entry name" value="P-loop containing nucleoside triphosphate hydrolases"/>
    <property type="match status" value="1"/>
</dbReference>
<evidence type="ECO:0000255" key="1">
    <source>
        <dbReference type="HAMAP-Rule" id="MF_00215"/>
    </source>
</evidence>
<accession>A1T0P0</accession>
<gene>
    <name evidence="1" type="primary">coaA</name>
    <name type="ordered locus">Ping_3622</name>
</gene>
<comment type="catalytic activity">
    <reaction evidence="1">
        <text>(R)-pantothenate + ATP = (R)-4'-phosphopantothenate + ADP + H(+)</text>
        <dbReference type="Rhea" id="RHEA:16373"/>
        <dbReference type="ChEBI" id="CHEBI:10986"/>
        <dbReference type="ChEBI" id="CHEBI:15378"/>
        <dbReference type="ChEBI" id="CHEBI:29032"/>
        <dbReference type="ChEBI" id="CHEBI:30616"/>
        <dbReference type="ChEBI" id="CHEBI:456216"/>
        <dbReference type="EC" id="2.7.1.33"/>
    </reaction>
</comment>
<comment type="pathway">
    <text evidence="1">Cofactor biosynthesis; coenzyme A biosynthesis; CoA from (R)-pantothenate: step 1/5.</text>
</comment>
<comment type="subcellular location">
    <subcellularLocation>
        <location evidence="1">Cytoplasm</location>
    </subcellularLocation>
</comment>
<comment type="similarity">
    <text evidence="1">Belongs to the prokaryotic pantothenate kinase family.</text>
</comment>
<feature type="chain" id="PRO_0000325561" description="Pantothenate kinase">
    <location>
        <begin position="1"/>
        <end position="322"/>
    </location>
</feature>
<feature type="binding site" evidence="1">
    <location>
        <begin position="101"/>
        <end position="108"/>
    </location>
    <ligand>
        <name>ATP</name>
        <dbReference type="ChEBI" id="CHEBI:30616"/>
    </ligand>
</feature>
<keyword id="KW-0067">ATP-binding</keyword>
<keyword id="KW-0173">Coenzyme A biosynthesis</keyword>
<keyword id="KW-0963">Cytoplasm</keyword>
<keyword id="KW-0418">Kinase</keyword>
<keyword id="KW-0547">Nucleotide-binding</keyword>
<keyword id="KW-1185">Reference proteome</keyword>
<keyword id="KW-0808">Transferase</keyword>
<reference key="1">
    <citation type="journal article" date="2008" name="BMC Genomics">
        <title>Genomics of an extreme psychrophile, Psychromonas ingrahamii.</title>
        <authorList>
            <person name="Riley M."/>
            <person name="Staley J.T."/>
            <person name="Danchin A."/>
            <person name="Wang T.Z."/>
            <person name="Brettin T.S."/>
            <person name="Hauser L.J."/>
            <person name="Land M.L."/>
            <person name="Thompson L.S."/>
        </authorList>
    </citation>
    <scope>NUCLEOTIDE SEQUENCE [LARGE SCALE GENOMIC DNA]</scope>
    <source>
        <strain>DSM 17664 / CCUG 51855 / 37</strain>
    </source>
</reference>
<organism>
    <name type="scientific">Psychromonas ingrahamii (strain DSM 17664 / CCUG 51855 / 37)</name>
    <dbReference type="NCBI Taxonomy" id="357804"/>
    <lineage>
        <taxon>Bacteria</taxon>
        <taxon>Pseudomonadati</taxon>
        <taxon>Pseudomonadota</taxon>
        <taxon>Gammaproteobacteria</taxon>
        <taxon>Alteromonadales</taxon>
        <taxon>Psychromonadaceae</taxon>
        <taxon>Psychromonas</taxon>
    </lineage>
</organism>
<name>COAA_PSYIN</name>